<feature type="chain" id="PRO_1000052346" description="Large ribosomal subunit protein uL4">
    <location>
        <begin position="1"/>
        <end position="216"/>
    </location>
</feature>
<feature type="region of interest" description="Disordered" evidence="2">
    <location>
        <begin position="47"/>
        <end position="77"/>
    </location>
</feature>
<organism>
    <name type="scientific">Acidiphilium cryptum (strain JF-5)</name>
    <dbReference type="NCBI Taxonomy" id="349163"/>
    <lineage>
        <taxon>Bacteria</taxon>
        <taxon>Pseudomonadati</taxon>
        <taxon>Pseudomonadota</taxon>
        <taxon>Alphaproteobacteria</taxon>
        <taxon>Acetobacterales</taxon>
        <taxon>Acidocellaceae</taxon>
        <taxon>Acidiphilium</taxon>
    </lineage>
</organism>
<comment type="function">
    <text evidence="1">One of the primary rRNA binding proteins, this protein initially binds near the 5'-end of the 23S rRNA. It is important during the early stages of 50S assembly. It makes multiple contacts with different domains of the 23S rRNA in the assembled 50S subunit and ribosome.</text>
</comment>
<comment type="function">
    <text evidence="1">Forms part of the polypeptide exit tunnel.</text>
</comment>
<comment type="subunit">
    <text evidence="1">Part of the 50S ribosomal subunit.</text>
</comment>
<comment type="similarity">
    <text evidence="1">Belongs to the universal ribosomal protein uL4 family.</text>
</comment>
<name>RL4_ACICJ</name>
<proteinExistence type="inferred from homology"/>
<dbReference type="EMBL" id="CP000697">
    <property type="protein sequence ID" value="ABQ31146.1"/>
    <property type="molecule type" value="Genomic_DNA"/>
</dbReference>
<dbReference type="RefSeq" id="WP_007424174.1">
    <property type="nucleotide sequence ID" value="NC_009484.1"/>
</dbReference>
<dbReference type="SMR" id="A5FZW4"/>
<dbReference type="STRING" id="349163.Acry_1945"/>
<dbReference type="KEGG" id="acr:Acry_1945"/>
<dbReference type="eggNOG" id="COG0088">
    <property type="taxonomic scope" value="Bacteria"/>
</dbReference>
<dbReference type="HOGENOM" id="CLU_041575_5_1_5"/>
<dbReference type="Proteomes" id="UP000000245">
    <property type="component" value="Chromosome"/>
</dbReference>
<dbReference type="GO" id="GO:1990904">
    <property type="term" value="C:ribonucleoprotein complex"/>
    <property type="evidence" value="ECO:0007669"/>
    <property type="project" value="UniProtKB-KW"/>
</dbReference>
<dbReference type="GO" id="GO:0005840">
    <property type="term" value="C:ribosome"/>
    <property type="evidence" value="ECO:0007669"/>
    <property type="project" value="UniProtKB-KW"/>
</dbReference>
<dbReference type="GO" id="GO:0019843">
    <property type="term" value="F:rRNA binding"/>
    <property type="evidence" value="ECO:0007669"/>
    <property type="project" value="UniProtKB-UniRule"/>
</dbReference>
<dbReference type="GO" id="GO:0003735">
    <property type="term" value="F:structural constituent of ribosome"/>
    <property type="evidence" value="ECO:0007669"/>
    <property type="project" value="InterPro"/>
</dbReference>
<dbReference type="GO" id="GO:0006412">
    <property type="term" value="P:translation"/>
    <property type="evidence" value="ECO:0007669"/>
    <property type="project" value="UniProtKB-UniRule"/>
</dbReference>
<dbReference type="Gene3D" id="3.40.1370.10">
    <property type="match status" value="1"/>
</dbReference>
<dbReference type="HAMAP" id="MF_01328_B">
    <property type="entry name" value="Ribosomal_uL4_B"/>
    <property type="match status" value="1"/>
</dbReference>
<dbReference type="InterPro" id="IPR002136">
    <property type="entry name" value="Ribosomal_uL4"/>
</dbReference>
<dbReference type="InterPro" id="IPR013005">
    <property type="entry name" value="Ribosomal_uL4-like"/>
</dbReference>
<dbReference type="InterPro" id="IPR023574">
    <property type="entry name" value="Ribosomal_uL4_dom_sf"/>
</dbReference>
<dbReference type="NCBIfam" id="TIGR03953">
    <property type="entry name" value="rplD_bact"/>
    <property type="match status" value="1"/>
</dbReference>
<dbReference type="PANTHER" id="PTHR10746">
    <property type="entry name" value="50S RIBOSOMAL PROTEIN L4"/>
    <property type="match status" value="1"/>
</dbReference>
<dbReference type="PANTHER" id="PTHR10746:SF6">
    <property type="entry name" value="LARGE RIBOSOMAL SUBUNIT PROTEIN UL4M"/>
    <property type="match status" value="1"/>
</dbReference>
<dbReference type="Pfam" id="PF00573">
    <property type="entry name" value="Ribosomal_L4"/>
    <property type="match status" value="1"/>
</dbReference>
<dbReference type="SUPFAM" id="SSF52166">
    <property type="entry name" value="Ribosomal protein L4"/>
    <property type="match status" value="1"/>
</dbReference>
<keyword id="KW-1185">Reference proteome</keyword>
<keyword id="KW-0687">Ribonucleoprotein</keyword>
<keyword id="KW-0689">Ribosomal protein</keyword>
<keyword id="KW-0694">RNA-binding</keyword>
<keyword id="KW-0699">rRNA-binding</keyword>
<accession>A5FZW4</accession>
<sequence>MQIDISTLDAGSAGKAELPEEYFAATPRADIMARVVHWQLAKRRAGTHKVKGMGEVSGTTKKPYRQKGTGNARQGSLRAPQFRTGGAVHGPVVRDHGYSLNKKVRRLGLISALSQKLAEGKLVVLDTVAGVSKTSELNVKLKKLGWGRTLVVDAVVDEGFARASRNLIGIDVLPVVGANVYDILQHDTLAITAAGLEGLKRRLDGIKAGANEEIAA</sequence>
<gene>
    <name evidence="1" type="primary">rplD</name>
    <name type="ordered locus">Acry_1945</name>
</gene>
<protein>
    <recommendedName>
        <fullName evidence="1">Large ribosomal subunit protein uL4</fullName>
    </recommendedName>
    <alternativeName>
        <fullName evidence="3">50S ribosomal protein L4</fullName>
    </alternativeName>
</protein>
<evidence type="ECO:0000255" key="1">
    <source>
        <dbReference type="HAMAP-Rule" id="MF_01328"/>
    </source>
</evidence>
<evidence type="ECO:0000256" key="2">
    <source>
        <dbReference type="SAM" id="MobiDB-lite"/>
    </source>
</evidence>
<evidence type="ECO:0000305" key="3"/>
<reference key="1">
    <citation type="submission" date="2007-05" db="EMBL/GenBank/DDBJ databases">
        <title>Complete sequence of chromosome of Acidiphilium cryptum JF-5.</title>
        <authorList>
            <consortium name="US DOE Joint Genome Institute"/>
            <person name="Copeland A."/>
            <person name="Lucas S."/>
            <person name="Lapidus A."/>
            <person name="Barry K."/>
            <person name="Detter J.C."/>
            <person name="Glavina del Rio T."/>
            <person name="Hammon N."/>
            <person name="Israni S."/>
            <person name="Dalin E."/>
            <person name="Tice H."/>
            <person name="Pitluck S."/>
            <person name="Sims D."/>
            <person name="Brettin T."/>
            <person name="Bruce D."/>
            <person name="Han C."/>
            <person name="Schmutz J."/>
            <person name="Larimer F."/>
            <person name="Land M."/>
            <person name="Hauser L."/>
            <person name="Kyrpides N."/>
            <person name="Kim E."/>
            <person name="Magnuson T."/>
            <person name="Richardson P."/>
        </authorList>
    </citation>
    <scope>NUCLEOTIDE SEQUENCE [LARGE SCALE GENOMIC DNA]</scope>
    <source>
        <strain>JF-5</strain>
    </source>
</reference>